<reference key="1">
    <citation type="submission" date="2002-05" db="EMBL/GenBank/DDBJ databases">
        <title>Full-length ribosomal protein sequence from the pheromone gland of spotted fireworm moth (Choristoneura parallela).</title>
        <authorList>
            <person name="Liu W."/>
            <person name="Jiao H."/>
            <person name="Roelofs W.L."/>
        </authorList>
    </citation>
    <scope>NUCLEOTIDE SEQUENCE [MRNA]</scope>
</reference>
<dbReference type="EMBL" id="AF514336">
    <property type="protein sequence ID" value="AAM53951.1"/>
    <property type="molecule type" value="mRNA"/>
</dbReference>
<dbReference type="SMR" id="Q8MUR2"/>
<dbReference type="GO" id="GO:0022627">
    <property type="term" value="C:cytosolic small ribosomal subunit"/>
    <property type="evidence" value="ECO:0007669"/>
    <property type="project" value="TreeGrafter"/>
</dbReference>
<dbReference type="GO" id="GO:0005730">
    <property type="term" value="C:nucleolus"/>
    <property type="evidence" value="ECO:0007669"/>
    <property type="project" value="TreeGrafter"/>
</dbReference>
<dbReference type="GO" id="GO:0070181">
    <property type="term" value="F:small ribosomal subunit rRNA binding"/>
    <property type="evidence" value="ECO:0007669"/>
    <property type="project" value="TreeGrafter"/>
</dbReference>
<dbReference type="GO" id="GO:0003735">
    <property type="term" value="F:structural constituent of ribosome"/>
    <property type="evidence" value="ECO:0007669"/>
    <property type="project" value="InterPro"/>
</dbReference>
<dbReference type="GO" id="GO:0006412">
    <property type="term" value="P:translation"/>
    <property type="evidence" value="ECO:0007669"/>
    <property type="project" value="InterPro"/>
</dbReference>
<dbReference type="CDD" id="cd00353">
    <property type="entry name" value="Ribosomal_S15p_S13e"/>
    <property type="match status" value="1"/>
</dbReference>
<dbReference type="FunFam" id="1.10.287.10:FF:000003">
    <property type="entry name" value="40S ribosomal protein S13"/>
    <property type="match status" value="1"/>
</dbReference>
<dbReference type="FunFam" id="4.10.860.130:FF:000001">
    <property type="entry name" value="40S ribosomal protein S13"/>
    <property type="match status" value="1"/>
</dbReference>
<dbReference type="Gene3D" id="4.10.860.130">
    <property type="match status" value="1"/>
</dbReference>
<dbReference type="Gene3D" id="1.10.287.10">
    <property type="entry name" value="S15/NS1, RNA-binding"/>
    <property type="match status" value="1"/>
</dbReference>
<dbReference type="HAMAP" id="MF_01343_A">
    <property type="entry name" value="Ribosomal_uS15_A"/>
    <property type="match status" value="1"/>
</dbReference>
<dbReference type="InterPro" id="IPR000589">
    <property type="entry name" value="Ribosomal_uS15"/>
</dbReference>
<dbReference type="InterPro" id="IPR023029">
    <property type="entry name" value="Ribosomal_uS15_arc_euk"/>
</dbReference>
<dbReference type="InterPro" id="IPR012606">
    <property type="entry name" value="Ribosomal_uS15_N"/>
</dbReference>
<dbReference type="InterPro" id="IPR009068">
    <property type="entry name" value="uS15_NS1_RNA-bd_sf"/>
</dbReference>
<dbReference type="NCBIfam" id="NF006331">
    <property type="entry name" value="PRK08561.1"/>
    <property type="match status" value="1"/>
</dbReference>
<dbReference type="PANTHER" id="PTHR11885">
    <property type="entry name" value="RIBOSOMAL PROTEIN S15P/S13E"/>
    <property type="match status" value="1"/>
</dbReference>
<dbReference type="PANTHER" id="PTHR11885:SF6">
    <property type="entry name" value="SMALL RIBOSOMAL SUBUNIT PROTEIN US15"/>
    <property type="match status" value="1"/>
</dbReference>
<dbReference type="Pfam" id="PF08069">
    <property type="entry name" value="Ribosomal_S13_N"/>
    <property type="match status" value="1"/>
</dbReference>
<dbReference type="Pfam" id="PF00312">
    <property type="entry name" value="Ribosomal_S15"/>
    <property type="match status" value="1"/>
</dbReference>
<dbReference type="SMART" id="SM01386">
    <property type="entry name" value="Ribosomal_S13_N"/>
    <property type="match status" value="1"/>
</dbReference>
<dbReference type="SMART" id="SM01387">
    <property type="entry name" value="Ribosomal_S15"/>
    <property type="match status" value="1"/>
</dbReference>
<dbReference type="SUPFAM" id="SSF47060">
    <property type="entry name" value="S15/NS1 RNA-binding domain"/>
    <property type="match status" value="1"/>
</dbReference>
<dbReference type="PROSITE" id="PS00362">
    <property type="entry name" value="RIBOSOMAL_S15"/>
    <property type="match status" value="1"/>
</dbReference>
<protein>
    <recommendedName>
        <fullName evidence="2">Small ribosomal subunit protein uS15</fullName>
    </recommendedName>
    <alternativeName>
        <fullName>40S ribosomal protein S13</fullName>
    </alternativeName>
</protein>
<sequence length="151" mass="17229">MGRMHAPGKGISQSALPYRRSVPTWLKLTADDVKEQIFKLGKKGLTPSQIGVKLRDSHGVVQVRFVTGKKILRIMKAMGLAPDLPEDLYYLIKKAVAMRKHLERNRKDKDSKFRLILVESRIHRLARYYKTKSVLPPNWKYESSTASALVA</sequence>
<organism>
    <name type="scientific">Choristoneura parallela</name>
    <name type="common">Spotted fireworm moth</name>
    <dbReference type="NCBI Taxonomy" id="106495"/>
    <lineage>
        <taxon>Eukaryota</taxon>
        <taxon>Metazoa</taxon>
        <taxon>Ecdysozoa</taxon>
        <taxon>Arthropoda</taxon>
        <taxon>Hexapoda</taxon>
        <taxon>Insecta</taxon>
        <taxon>Pterygota</taxon>
        <taxon>Neoptera</taxon>
        <taxon>Endopterygota</taxon>
        <taxon>Lepidoptera</taxon>
        <taxon>Glossata</taxon>
        <taxon>Ditrysia</taxon>
        <taxon>Tortricoidea</taxon>
        <taxon>Tortricidae</taxon>
        <taxon>Tortricinae</taxon>
        <taxon>Choristoneura</taxon>
    </lineage>
</organism>
<gene>
    <name type="primary">RpS13</name>
</gene>
<keyword id="KW-0687">Ribonucleoprotein</keyword>
<keyword id="KW-0689">Ribosomal protein</keyword>
<evidence type="ECO:0000250" key="1"/>
<evidence type="ECO:0000305" key="2"/>
<name>RS13_CHOPR</name>
<comment type="similarity">
    <text evidence="2">Belongs to the universal ribosomal protein uS15 family.</text>
</comment>
<proteinExistence type="evidence at transcript level"/>
<accession>Q8MUR2</accession>
<feature type="initiator methionine" description="Removed" evidence="1">
    <location>
        <position position="1"/>
    </location>
</feature>
<feature type="chain" id="PRO_0000115675" description="Small ribosomal subunit protein uS15">
    <location>
        <begin position="2"/>
        <end position="151"/>
    </location>
</feature>